<proteinExistence type="inferred from homology"/>
<feature type="chain" id="PRO_1000076998" description="Translational regulator CsrA">
    <location>
        <begin position="1"/>
        <end position="65"/>
    </location>
</feature>
<comment type="function">
    <text evidence="1">A key translational regulator that binds mRNA to regulate translation initiation and/or mRNA stability. Mediates global changes in gene expression, shifting from rapid growth to stress survival by linking envelope stress, the stringent response and the catabolite repression systems. Usually binds in the 5'-UTR; binding at or near the Shine-Dalgarno sequence prevents ribosome-binding, repressing translation, binding elsewhere in the 5'-UTR can activate translation and/or stabilize the mRNA. Its function is antagonized by small RNA(s).</text>
</comment>
<comment type="subunit">
    <text evidence="1">Homodimer; the beta-strands of each monomer intercalate to form a hydrophobic core, while the alpha-helices form wings that extend away from the core.</text>
</comment>
<comment type="subcellular location">
    <subcellularLocation>
        <location evidence="1">Cytoplasm</location>
    </subcellularLocation>
</comment>
<comment type="similarity">
    <text evidence="1">Belongs to the CsrA/RsmA family.</text>
</comment>
<evidence type="ECO:0000255" key="1">
    <source>
        <dbReference type="HAMAP-Rule" id="MF_00167"/>
    </source>
</evidence>
<gene>
    <name evidence="1" type="primary">csrA</name>
    <name type="ordered locus">Spea_1197</name>
</gene>
<reference key="1">
    <citation type="submission" date="2007-10" db="EMBL/GenBank/DDBJ databases">
        <title>Complete sequence of Shewanella pealeana ATCC 700345.</title>
        <authorList>
            <consortium name="US DOE Joint Genome Institute"/>
            <person name="Copeland A."/>
            <person name="Lucas S."/>
            <person name="Lapidus A."/>
            <person name="Barry K."/>
            <person name="Glavina del Rio T."/>
            <person name="Dalin E."/>
            <person name="Tice H."/>
            <person name="Pitluck S."/>
            <person name="Chertkov O."/>
            <person name="Brettin T."/>
            <person name="Bruce D."/>
            <person name="Detter J.C."/>
            <person name="Han C."/>
            <person name="Schmutz J."/>
            <person name="Larimer F."/>
            <person name="Land M."/>
            <person name="Hauser L."/>
            <person name="Kyrpides N."/>
            <person name="Kim E."/>
            <person name="Zhao J.-S.Z."/>
            <person name="Manno D."/>
            <person name="Hawari J."/>
            <person name="Richardson P."/>
        </authorList>
    </citation>
    <scope>NUCLEOTIDE SEQUENCE [LARGE SCALE GENOMIC DNA]</scope>
    <source>
        <strain>ATCC 700345 / ANG-SQ1</strain>
    </source>
</reference>
<dbReference type="EMBL" id="CP000851">
    <property type="protein sequence ID" value="ABV86524.1"/>
    <property type="molecule type" value="Genomic_DNA"/>
</dbReference>
<dbReference type="RefSeq" id="WP_006082602.1">
    <property type="nucleotide sequence ID" value="NC_009901.1"/>
</dbReference>
<dbReference type="SMR" id="A8H1T7"/>
<dbReference type="STRING" id="398579.Spea_1197"/>
<dbReference type="GeneID" id="94727129"/>
<dbReference type="KEGG" id="spl:Spea_1197"/>
<dbReference type="eggNOG" id="COG1551">
    <property type="taxonomic scope" value="Bacteria"/>
</dbReference>
<dbReference type="HOGENOM" id="CLU_164837_2_2_6"/>
<dbReference type="OrthoDB" id="9809061at2"/>
<dbReference type="Proteomes" id="UP000002608">
    <property type="component" value="Chromosome"/>
</dbReference>
<dbReference type="GO" id="GO:0005829">
    <property type="term" value="C:cytosol"/>
    <property type="evidence" value="ECO:0007669"/>
    <property type="project" value="TreeGrafter"/>
</dbReference>
<dbReference type="GO" id="GO:0048027">
    <property type="term" value="F:mRNA 5'-UTR binding"/>
    <property type="evidence" value="ECO:0007669"/>
    <property type="project" value="UniProtKB-UniRule"/>
</dbReference>
<dbReference type="GO" id="GO:0006402">
    <property type="term" value="P:mRNA catabolic process"/>
    <property type="evidence" value="ECO:0007669"/>
    <property type="project" value="InterPro"/>
</dbReference>
<dbReference type="GO" id="GO:0045947">
    <property type="term" value="P:negative regulation of translational initiation"/>
    <property type="evidence" value="ECO:0007669"/>
    <property type="project" value="UniProtKB-UniRule"/>
</dbReference>
<dbReference type="GO" id="GO:0045948">
    <property type="term" value="P:positive regulation of translational initiation"/>
    <property type="evidence" value="ECO:0007669"/>
    <property type="project" value="UniProtKB-UniRule"/>
</dbReference>
<dbReference type="GO" id="GO:0006109">
    <property type="term" value="P:regulation of carbohydrate metabolic process"/>
    <property type="evidence" value="ECO:0007669"/>
    <property type="project" value="UniProtKB-UniRule"/>
</dbReference>
<dbReference type="FunFam" id="2.60.40.4380:FF:000001">
    <property type="entry name" value="Translational regulator CsrA"/>
    <property type="match status" value="1"/>
</dbReference>
<dbReference type="Gene3D" id="2.60.40.4380">
    <property type="entry name" value="Translational regulator CsrA"/>
    <property type="match status" value="1"/>
</dbReference>
<dbReference type="HAMAP" id="MF_00167">
    <property type="entry name" value="CsrA"/>
    <property type="match status" value="1"/>
</dbReference>
<dbReference type="InterPro" id="IPR003751">
    <property type="entry name" value="CsrA"/>
</dbReference>
<dbReference type="InterPro" id="IPR036107">
    <property type="entry name" value="CsrA_sf"/>
</dbReference>
<dbReference type="NCBIfam" id="TIGR00202">
    <property type="entry name" value="csrA"/>
    <property type="match status" value="1"/>
</dbReference>
<dbReference type="NCBIfam" id="NF002469">
    <property type="entry name" value="PRK01712.1"/>
    <property type="match status" value="1"/>
</dbReference>
<dbReference type="PANTHER" id="PTHR34984">
    <property type="entry name" value="CARBON STORAGE REGULATOR"/>
    <property type="match status" value="1"/>
</dbReference>
<dbReference type="PANTHER" id="PTHR34984:SF1">
    <property type="entry name" value="CARBON STORAGE REGULATOR"/>
    <property type="match status" value="1"/>
</dbReference>
<dbReference type="Pfam" id="PF02599">
    <property type="entry name" value="CsrA"/>
    <property type="match status" value="1"/>
</dbReference>
<dbReference type="SUPFAM" id="SSF117130">
    <property type="entry name" value="CsrA-like"/>
    <property type="match status" value="1"/>
</dbReference>
<name>CSRA_SHEPA</name>
<accession>A8H1T7</accession>
<keyword id="KW-0010">Activator</keyword>
<keyword id="KW-0963">Cytoplasm</keyword>
<keyword id="KW-1185">Reference proteome</keyword>
<keyword id="KW-0678">Repressor</keyword>
<keyword id="KW-0694">RNA-binding</keyword>
<keyword id="KW-0810">Translation regulation</keyword>
<sequence length="65" mass="7125">MLILTRRVGETLMIGDEVTVTVLGVKGNQVRIGVNAPKEVSVHREEIYQRIQSEKSGTPSEGGNF</sequence>
<organism>
    <name type="scientific">Shewanella pealeana (strain ATCC 700345 / ANG-SQ1)</name>
    <dbReference type="NCBI Taxonomy" id="398579"/>
    <lineage>
        <taxon>Bacteria</taxon>
        <taxon>Pseudomonadati</taxon>
        <taxon>Pseudomonadota</taxon>
        <taxon>Gammaproteobacteria</taxon>
        <taxon>Alteromonadales</taxon>
        <taxon>Shewanellaceae</taxon>
        <taxon>Shewanella</taxon>
    </lineage>
</organism>
<protein>
    <recommendedName>
        <fullName evidence="1">Translational regulator CsrA</fullName>
    </recommendedName>
    <alternativeName>
        <fullName evidence="1">Carbon storage regulator</fullName>
    </alternativeName>
</protein>